<evidence type="ECO:0000255" key="1">
    <source>
        <dbReference type="HAMAP-Rule" id="MF_00923"/>
    </source>
</evidence>
<comment type="function">
    <text evidence="1">Part of the outer membrane protein assembly complex, which is involved in assembly and insertion of beta-barrel proteins into the outer membrane.</text>
</comment>
<comment type="subunit">
    <text evidence="1">Part of the Bam complex, which is composed of the outer membrane protein BamA, and four lipoproteins BamB, BamC, BamD and BamE.</text>
</comment>
<comment type="subcellular location">
    <subcellularLocation>
        <location evidence="1">Cell outer membrane</location>
    </subcellularLocation>
</comment>
<comment type="similarity">
    <text evidence="1">Belongs to the BamB family.</text>
</comment>
<name>BAMB_MOREP</name>
<gene>
    <name evidence="1" type="primary">bamB</name>
    <name type="ordered locus">MEPCIT_185</name>
</gene>
<sequence>MVLSLLSVMLLSGYKFLSKKEELVTILPLPQVENKFKPQKIWSYYIGSNNGGGDFYSNLQPTVQNTRVFVANRYGLVKALDADSGKELWAKDLSIYTGCFSRNRPAQLSGGVTAVGNRIYVASELAKVYAMEAKCGSLAWEVLVAGETLSPPVVSDGVILIHTSNGMLQALNEADGALKWTVNLEAKMLNIRGGSTPTTACGTAIVGSDNGLVSAVMLNIGQIIWQQRISQTGGVTEIARINDVQATPVVVNGYVYALAYNGNLAALDLFSGKLMWSREIGSFTNMLVENGIIYLVDQNDRVIAVDAKNGITSWYQSALLHRNLTSPVLNKDSIVIGDSGGYLHWINIDDGRLVAQKKIASALLVTPLFDGDKIIVQATNGEVHAIIR</sequence>
<keyword id="KW-0998">Cell outer membrane</keyword>
<keyword id="KW-0472">Membrane</keyword>
<keyword id="KW-1185">Reference proteome</keyword>
<keyword id="KW-0732">Signal</keyword>
<feature type="signal peptide" evidence="1">
    <location>
        <begin position="1"/>
        <end position="17"/>
    </location>
</feature>
<feature type="chain" id="PRO_0000417683" description="Outer membrane protein assembly factor BamB">
    <location>
        <begin position="18"/>
        <end position="388"/>
    </location>
</feature>
<proteinExistence type="inferred from homology"/>
<reference key="1">
    <citation type="journal article" date="2011" name="Curr. Biol.">
        <title>An interdependent metabolic patchwork in the nested symbiosis of mealybugs.</title>
        <authorList>
            <person name="McCutcheon J.P."/>
            <person name="von Dohlen C.D."/>
        </authorList>
    </citation>
    <scope>NUCLEOTIDE SEQUENCE [LARGE SCALE GENOMIC DNA]</scope>
    <source>
        <strain>PCIT</strain>
    </source>
</reference>
<accession>F7XXL0</accession>
<organism>
    <name type="scientific">Moranella endobia (strain PCIT)</name>
    <dbReference type="NCBI Taxonomy" id="903503"/>
    <lineage>
        <taxon>Bacteria</taxon>
        <taxon>Pseudomonadati</taxon>
        <taxon>Pseudomonadota</taxon>
        <taxon>Gammaproteobacteria</taxon>
        <taxon>Enterobacterales</taxon>
        <taxon>Enterobacteriaceae</taxon>
        <taxon>Candidatus Moranella</taxon>
    </lineage>
</organism>
<dbReference type="EMBL" id="CP002243">
    <property type="protein sequence ID" value="AEI74836.1"/>
    <property type="molecule type" value="Genomic_DNA"/>
</dbReference>
<dbReference type="SMR" id="F7XXL0"/>
<dbReference type="STRING" id="903503.MEPCIT_185"/>
<dbReference type="KEGG" id="men:MEPCIT_185"/>
<dbReference type="eggNOG" id="COG1520">
    <property type="taxonomic scope" value="Bacteria"/>
</dbReference>
<dbReference type="HOGENOM" id="CLU_027480_0_1_6"/>
<dbReference type="OrthoDB" id="5173551at2"/>
<dbReference type="Proteomes" id="UP000000504">
    <property type="component" value="Chromosome"/>
</dbReference>
<dbReference type="GO" id="GO:0009279">
    <property type="term" value="C:cell outer membrane"/>
    <property type="evidence" value="ECO:0007669"/>
    <property type="project" value="UniProtKB-SubCell"/>
</dbReference>
<dbReference type="GO" id="GO:0043165">
    <property type="term" value="P:Gram-negative-bacterium-type cell outer membrane assembly"/>
    <property type="evidence" value="ECO:0007669"/>
    <property type="project" value="UniProtKB-UniRule"/>
</dbReference>
<dbReference type="GO" id="GO:0051205">
    <property type="term" value="P:protein insertion into membrane"/>
    <property type="evidence" value="ECO:0007669"/>
    <property type="project" value="UniProtKB-UniRule"/>
</dbReference>
<dbReference type="Gene3D" id="2.130.10.10">
    <property type="entry name" value="YVTN repeat-like/Quinoprotein amine dehydrogenase"/>
    <property type="match status" value="1"/>
</dbReference>
<dbReference type="HAMAP" id="MF_00923">
    <property type="entry name" value="OM_assembly_BamB"/>
    <property type="match status" value="1"/>
</dbReference>
<dbReference type="InterPro" id="IPR017687">
    <property type="entry name" value="BamB"/>
</dbReference>
<dbReference type="InterPro" id="IPR018391">
    <property type="entry name" value="PQQ_b-propeller_rpt"/>
</dbReference>
<dbReference type="InterPro" id="IPR002372">
    <property type="entry name" value="PQQ_rpt_dom"/>
</dbReference>
<dbReference type="InterPro" id="IPR011047">
    <property type="entry name" value="Quinoprotein_ADH-like_sf"/>
</dbReference>
<dbReference type="InterPro" id="IPR015943">
    <property type="entry name" value="WD40/YVTN_repeat-like_dom_sf"/>
</dbReference>
<dbReference type="NCBIfam" id="TIGR03300">
    <property type="entry name" value="assembly_YfgL"/>
    <property type="match status" value="1"/>
</dbReference>
<dbReference type="NCBIfam" id="NF008351">
    <property type="entry name" value="PRK11138.1"/>
    <property type="match status" value="1"/>
</dbReference>
<dbReference type="PANTHER" id="PTHR34512">
    <property type="entry name" value="CELL SURFACE PROTEIN"/>
    <property type="match status" value="1"/>
</dbReference>
<dbReference type="PANTHER" id="PTHR34512:SF30">
    <property type="entry name" value="OUTER MEMBRANE PROTEIN ASSEMBLY FACTOR BAMB"/>
    <property type="match status" value="1"/>
</dbReference>
<dbReference type="Pfam" id="PF13360">
    <property type="entry name" value="PQQ_2"/>
    <property type="match status" value="1"/>
</dbReference>
<dbReference type="SMART" id="SM00564">
    <property type="entry name" value="PQQ"/>
    <property type="match status" value="7"/>
</dbReference>
<dbReference type="SUPFAM" id="SSF50998">
    <property type="entry name" value="Quinoprotein alcohol dehydrogenase-like"/>
    <property type="match status" value="1"/>
</dbReference>
<protein>
    <recommendedName>
        <fullName evidence="1">Outer membrane protein assembly factor BamB</fullName>
    </recommendedName>
</protein>